<organism>
    <name type="scientific">Porphyromonas gingivalis (strain ATCC BAA-308 / W83)</name>
    <dbReference type="NCBI Taxonomy" id="242619"/>
    <lineage>
        <taxon>Bacteria</taxon>
        <taxon>Pseudomonadati</taxon>
        <taxon>Bacteroidota</taxon>
        <taxon>Bacteroidia</taxon>
        <taxon>Bacteroidales</taxon>
        <taxon>Porphyromonadaceae</taxon>
        <taxon>Porphyromonas</taxon>
    </lineage>
</organism>
<protein>
    <recommendedName>
        <fullName>Elongation factor P 1</fullName>
        <shortName>EF-P 1</shortName>
    </recommendedName>
</protein>
<name>EFP1_PORGI</name>
<gene>
    <name type="primary">efp1</name>
    <name type="ordered locus">PG_0568</name>
</gene>
<accession>Q7MWN4</accession>
<reference key="1">
    <citation type="journal article" date="2003" name="J. Bacteriol.">
        <title>Complete genome sequence of the oral pathogenic bacterium Porphyromonas gingivalis strain W83.</title>
        <authorList>
            <person name="Nelson K.E."/>
            <person name="Fleischmann R.D."/>
            <person name="DeBoy R.T."/>
            <person name="Paulsen I.T."/>
            <person name="Fouts D.E."/>
            <person name="Eisen J.A."/>
            <person name="Daugherty S.C."/>
            <person name="Dodson R.J."/>
            <person name="Durkin A.S."/>
            <person name="Gwinn M.L."/>
            <person name="Haft D.H."/>
            <person name="Kolonay J.F."/>
            <person name="Nelson W.C."/>
            <person name="Mason T.M."/>
            <person name="Tallon L."/>
            <person name="Gray J."/>
            <person name="Granger D."/>
            <person name="Tettelin H."/>
            <person name="Dong H."/>
            <person name="Galvin J.L."/>
            <person name="Duncan M.J."/>
            <person name="Dewhirst F.E."/>
            <person name="Fraser C.M."/>
        </authorList>
    </citation>
    <scope>NUCLEOTIDE SEQUENCE [LARGE SCALE GENOMIC DNA]</scope>
    <source>
        <strain>ATCC BAA-308 / W83</strain>
    </source>
</reference>
<keyword id="KW-0963">Cytoplasm</keyword>
<keyword id="KW-0251">Elongation factor</keyword>
<keyword id="KW-0648">Protein biosynthesis</keyword>
<keyword id="KW-1185">Reference proteome</keyword>
<feature type="chain" id="PRO_0000094305" description="Elongation factor P 1">
    <location>
        <begin position="1"/>
        <end position="188"/>
    </location>
</feature>
<evidence type="ECO:0000250" key="1"/>
<evidence type="ECO:0000305" key="2"/>
<sequence>MATTADFRNGMCLEIEGQYYFIVEFLHVKPGKGPAFVRTKLKNVATGRILDKTWNSGVKVEEVRIERRPYQYLYQDEMGYNFMHPETFEQITIPGASIDGVQFLKDGDMVEAMVHATSETVLTCELPPHVKLRVTYTEPGLKGDTATNTLKPATVETGAEVRVPLFIQEGELIEVDTRDGSYIGRVKE</sequence>
<comment type="function">
    <text evidence="1">Involved in peptide bond synthesis. Stimulates efficient translation and peptide-bond synthesis on native or reconstituted 70S ribosomes in vitro. Probably functions indirectly by altering the affinity of the ribosome for aminoacyl-tRNA, thus increasing their reactivity as acceptors for peptidyl transferase (By similarity).</text>
</comment>
<comment type="pathway">
    <text>Protein biosynthesis; polypeptide chain elongation.</text>
</comment>
<comment type="subcellular location">
    <subcellularLocation>
        <location evidence="1">Cytoplasm</location>
    </subcellularLocation>
</comment>
<comment type="similarity">
    <text evidence="2">Belongs to the elongation factor P family.</text>
</comment>
<proteinExistence type="inferred from homology"/>
<dbReference type="EMBL" id="AE015924">
    <property type="protein sequence ID" value="AAQ65756.1"/>
    <property type="molecule type" value="Genomic_DNA"/>
</dbReference>
<dbReference type="SMR" id="Q7MWN4"/>
<dbReference type="STRING" id="242619.PG_0568"/>
<dbReference type="EnsemblBacteria" id="AAQ65756">
    <property type="protein sequence ID" value="AAQ65756"/>
    <property type="gene ID" value="PG_0568"/>
</dbReference>
<dbReference type="KEGG" id="pgi:PG_0568"/>
<dbReference type="eggNOG" id="COG0231">
    <property type="taxonomic scope" value="Bacteria"/>
</dbReference>
<dbReference type="HOGENOM" id="CLU_074944_0_1_10"/>
<dbReference type="UniPathway" id="UPA00345"/>
<dbReference type="Proteomes" id="UP000000588">
    <property type="component" value="Chromosome"/>
</dbReference>
<dbReference type="GO" id="GO:0005737">
    <property type="term" value="C:cytoplasm"/>
    <property type="evidence" value="ECO:0007669"/>
    <property type="project" value="UniProtKB-SubCell"/>
</dbReference>
<dbReference type="GO" id="GO:0003746">
    <property type="term" value="F:translation elongation factor activity"/>
    <property type="evidence" value="ECO:0007669"/>
    <property type="project" value="UniProtKB-UniRule"/>
</dbReference>
<dbReference type="GO" id="GO:0043043">
    <property type="term" value="P:peptide biosynthetic process"/>
    <property type="evidence" value="ECO:0007669"/>
    <property type="project" value="InterPro"/>
</dbReference>
<dbReference type="CDD" id="cd04470">
    <property type="entry name" value="S1_EF-P_repeat_1"/>
    <property type="match status" value="1"/>
</dbReference>
<dbReference type="CDD" id="cd05794">
    <property type="entry name" value="S1_EF-P_repeat_2"/>
    <property type="match status" value="1"/>
</dbReference>
<dbReference type="FunFam" id="2.30.30.30:FF:000003">
    <property type="entry name" value="Elongation factor P"/>
    <property type="match status" value="1"/>
</dbReference>
<dbReference type="FunFam" id="2.40.50.140:FF:000004">
    <property type="entry name" value="Elongation factor P"/>
    <property type="match status" value="1"/>
</dbReference>
<dbReference type="Gene3D" id="2.30.30.30">
    <property type="match status" value="1"/>
</dbReference>
<dbReference type="Gene3D" id="2.40.50.140">
    <property type="entry name" value="Nucleic acid-binding proteins"/>
    <property type="match status" value="2"/>
</dbReference>
<dbReference type="HAMAP" id="MF_00141">
    <property type="entry name" value="EF_P"/>
    <property type="match status" value="1"/>
</dbReference>
<dbReference type="InterPro" id="IPR015365">
    <property type="entry name" value="Elong-fact-P_C"/>
</dbReference>
<dbReference type="InterPro" id="IPR012340">
    <property type="entry name" value="NA-bd_OB-fold"/>
</dbReference>
<dbReference type="InterPro" id="IPR014722">
    <property type="entry name" value="Rib_uL2_dom2"/>
</dbReference>
<dbReference type="InterPro" id="IPR020599">
    <property type="entry name" value="Transl_elong_fac_P/YeiP"/>
</dbReference>
<dbReference type="InterPro" id="IPR013185">
    <property type="entry name" value="Transl_elong_KOW-like"/>
</dbReference>
<dbReference type="InterPro" id="IPR001059">
    <property type="entry name" value="Transl_elong_P/YeiP_cen"/>
</dbReference>
<dbReference type="InterPro" id="IPR013852">
    <property type="entry name" value="Transl_elong_P/YeiP_CS"/>
</dbReference>
<dbReference type="InterPro" id="IPR011768">
    <property type="entry name" value="Transl_elongation_fac_P"/>
</dbReference>
<dbReference type="InterPro" id="IPR008991">
    <property type="entry name" value="Translation_prot_SH3-like_sf"/>
</dbReference>
<dbReference type="NCBIfam" id="TIGR00038">
    <property type="entry name" value="efp"/>
    <property type="match status" value="1"/>
</dbReference>
<dbReference type="NCBIfam" id="NF001810">
    <property type="entry name" value="PRK00529.1"/>
    <property type="match status" value="1"/>
</dbReference>
<dbReference type="PANTHER" id="PTHR30053">
    <property type="entry name" value="ELONGATION FACTOR P"/>
    <property type="match status" value="1"/>
</dbReference>
<dbReference type="PANTHER" id="PTHR30053:SF12">
    <property type="entry name" value="ELONGATION FACTOR P (EF-P) FAMILY PROTEIN"/>
    <property type="match status" value="1"/>
</dbReference>
<dbReference type="Pfam" id="PF01132">
    <property type="entry name" value="EFP"/>
    <property type="match status" value="1"/>
</dbReference>
<dbReference type="Pfam" id="PF08207">
    <property type="entry name" value="EFP_N"/>
    <property type="match status" value="1"/>
</dbReference>
<dbReference type="Pfam" id="PF09285">
    <property type="entry name" value="Elong-fact-P_C"/>
    <property type="match status" value="1"/>
</dbReference>
<dbReference type="PIRSF" id="PIRSF005901">
    <property type="entry name" value="EF-P"/>
    <property type="match status" value="1"/>
</dbReference>
<dbReference type="SMART" id="SM01185">
    <property type="entry name" value="EFP"/>
    <property type="match status" value="1"/>
</dbReference>
<dbReference type="SMART" id="SM00841">
    <property type="entry name" value="Elong-fact-P_C"/>
    <property type="match status" value="1"/>
</dbReference>
<dbReference type="SUPFAM" id="SSF50249">
    <property type="entry name" value="Nucleic acid-binding proteins"/>
    <property type="match status" value="2"/>
</dbReference>
<dbReference type="SUPFAM" id="SSF50104">
    <property type="entry name" value="Translation proteins SH3-like domain"/>
    <property type="match status" value="1"/>
</dbReference>
<dbReference type="PROSITE" id="PS01275">
    <property type="entry name" value="EFP"/>
    <property type="match status" value="1"/>
</dbReference>